<organismHost>
    <name type="scientific">Homo sapiens</name>
    <name type="common">Human</name>
    <dbReference type="NCBI Taxonomy" id="9606"/>
</organismHost>
<keyword id="KW-0053">Apoptosis</keyword>
<keyword id="KW-0244">Early protein</keyword>
<keyword id="KW-1032">Host cell membrane</keyword>
<keyword id="KW-1043">Host membrane</keyword>
<keyword id="KW-1048">Host nucleus</keyword>
<keyword id="KW-0945">Host-virus interaction</keyword>
<keyword id="KW-1081">Inhibition of host apoptosis by viral BCL2-like protein</keyword>
<keyword id="KW-0472">Membrane</keyword>
<keyword id="KW-1119">Modulation of host cell apoptosis by virus</keyword>
<name>E1BS_ADE41</name>
<comment type="function">
    <text evidence="1">Putative adenovirus Bcl-2 homolog that inhibits apoptosis induced by TNF or FAS pathways, as well as p53-mediated apoptosis. Without E1B 19K function, virus production is compromised because of premature death of host cell. Interacts with Bax protein in cell lysates (By similarity).</text>
</comment>
<comment type="subcellular location">
    <subcellularLocation>
        <location evidence="1">Host cell membrane</location>
    </subcellularLocation>
    <subcellularLocation>
        <location evidence="1">Host nucleus envelope</location>
    </subcellularLocation>
    <subcellularLocation>
        <location evidence="1">Host nucleus lamina</location>
    </subcellularLocation>
    <text evidence="1">Associated with the plasma and nuclear membranes, and with the insoluble nuclear lamina.</text>
</comment>
<comment type="similarity">
    <text evidence="3">Belongs to the adenoviridae E1B 19 kDa protein family.</text>
</comment>
<accession>P10544</accession>
<feature type="chain" id="PRO_0000221716" description="E1B protein, small T-antigen">
    <location>
        <begin position="1"/>
        <end position="170"/>
    </location>
</feature>
<feature type="region of interest" description="Disordered" evidence="2">
    <location>
        <begin position="137"/>
        <end position="170"/>
    </location>
</feature>
<feature type="compositionally biased region" description="Acidic residues" evidence="2">
    <location>
        <begin position="148"/>
        <end position="158"/>
    </location>
</feature>
<feature type="sequence conflict" description="In Ref. 2." evidence="3" ref="2">
    <location>
        <begin position="157"/>
        <end position="158"/>
    </location>
</feature>
<dbReference type="EMBL" id="M18289">
    <property type="protein sequence ID" value="AAA42451.1"/>
    <property type="molecule type" value="mRNA"/>
</dbReference>
<dbReference type="EMBL" id="M87544">
    <property type="protein sequence ID" value="AAA42474.1"/>
    <property type="molecule type" value="Genomic_DNA"/>
</dbReference>
<dbReference type="PIR" id="E27333">
    <property type="entry name" value="WMADF5"/>
</dbReference>
<dbReference type="GO" id="GO:0044203">
    <property type="term" value="C:host cell nuclear lamina"/>
    <property type="evidence" value="ECO:0007669"/>
    <property type="project" value="UniProtKB-SubCell"/>
</dbReference>
<dbReference type="GO" id="GO:0020002">
    <property type="term" value="C:host cell plasma membrane"/>
    <property type="evidence" value="ECO:0007669"/>
    <property type="project" value="UniProtKB-SubCell"/>
</dbReference>
<dbReference type="GO" id="GO:0016020">
    <property type="term" value="C:membrane"/>
    <property type="evidence" value="ECO:0007669"/>
    <property type="project" value="UniProtKB-KW"/>
</dbReference>
<dbReference type="GO" id="GO:0033668">
    <property type="term" value="P:symbiont-mediated suppression of host apoptosis"/>
    <property type="evidence" value="ECO:0007669"/>
    <property type="project" value="UniProtKB-KW"/>
</dbReference>
<dbReference type="InterPro" id="IPR002924">
    <property type="entry name" value="Adenovir_t-Ag_E1B_19kDa"/>
</dbReference>
<dbReference type="InterPro" id="IPR002475">
    <property type="entry name" value="Bcl2-like"/>
</dbReference>
<dbReference type="Pfam" id="PF01691">
    <property type="entry name" value="Adeno_E1B_19K"/>
    <property type="match status" value="1"/>
</dbReference>
<dbReference type="PROSITE" id="PS50062">
    <property type="entry name" value="BCL2_FAMILY"/>
    <property type="match status" value="1"/>
</dbReference>
<sequence>MEFWSELQSYQSLRRLLELASARTSSCWRFIFGSTLTNVIYRAKEDYSSRFAELLSFNPGIFASLNLGHHSFFQEIVIKNLDFSSPGRTVSGLAFICFILDQWSAQTHLSEGYTLDYMTMALWRTLLRRKRVLGCSPAQPPHGLDPVREEEEEEEEEENLRAGLDPQTEL</sequence>
<organism>
    <name type="scientific">Human adenovirus F serotype 41</name>
    <name type="common">HAdV-41</name>
    <name type="synonym">Human adenovirus 41</name>
    <dbReference type="NCBI Taxonomy" id="10524"/>
    <lineage>
        <taxon>Viruses</taxon>
        <taxon>Varidnaviria</taxon>
        <taxon>Bamfordvirae</taxon>
        <taxon>Preplasmiviricota</taxon>
        <taxon>Tectiliviricetes</taxon>
        <taxon>Rowavirales</taxon>
        <taxon>Adenoviridae</taxon>
        <taxon>Mastadenovirus</taxon>
        <taxon>Human mastadenovirus F</taxon>
    </lineage>
</organism>
<reference key="1">
    <citation type="journal article" date="1987" name="Gene">
        <title>Structure and organization of the left-terminal DNA regions of fastidious adenovirus types 40 and 41.</title>
        <authorList>
            <person name="van Loon A.E."/>
            <person name="Ligtenberg M."/>
            <person name="Reemst A.M.C.B."/>
            <person name="Sussenbach J.S."/>
            <person name="Rozijn T.H."/>
        </authorList>
    </citation>
    <scope>NUCLEOTIDE SEQUENCE [MRNA]</scope>
</reference>
<reference key="2">
    <citation type="journal article" date="1992" name="Virology">
        <title>The E1B transcription map of the enteric adenovirus type 41.</title>
        <authorList>
            <person name="Allard A."/>
            <person name="Wadell G."/>
        </authorList>
    </citation>
    <scope>NUCLEOTIDE SEQUENCE [GENOMIC DNA]</scope>
</reference>
<proteinExistence type="evidence at transcript level"/>
<protein>
    <recommendedName>
        <fullName>E1B protein, small T-antigen</fullName>
    </recommendedName>
    <alternativeName>
        <fullName>E1B 19 kDa protein</fullName>
        <shortName>E1B-19K</shortName>
    </alternativeName>
</protein>
<evidence type="ECO:0000250" key="1"/>
<evidence type="ECO:0000256" key="2">
    <source>
        <dbReference type="SAM" id="MobiDB-lite"/>
    </source>
</evidence>
<evidence type="ECO:0000305" key="3"/>